<name>Y484_STAAC</name>
<dbReference type="EMBL" id="CP000046">
    <property type="protein sequence ID" value="AAW37605.1"/>
    <property type="status" value="ALT_INIT"/>
    <property type="molecule type" value="Genomic_DNA"/>
</dbReference>
<dbReference type="SMR" id="Q5HIN3"/>
<dbReference type="KEGG" id="sac:SACOL0484"/>
<dbReference type="HOGENOM" id="CLU_071589_0_1_9"/>
<dbReference type="Proteomes" id="UP000000530">
    <property type="component" value="Chromosome"/>
</dbReference>
<dbReference type="GO" id="GO:0005886">
    <property type="term" value="C:plasma membrane"/>
    <property type="evidence" value="ECO:0007669"/>
    <property type="project" value="UniProtKB-SubCell"/>
</dbReference>
<dbReference type="Gene3D" id="2.50.20.40">
    <property type="match status" value="1"/>
</dbReference>
<dbReference type="InterPro" id="IPR007595">
    <property type="entry name" value="Csa"/>
</dbReference>
<dbReference type="InterPro" id="IPR038641">
    <property type="entry name" value="Csa_sf"/>
</dbReference>
<dbReference type="NCBIfam" id="TIGR01742">
    <property type="entry name" value="SA_tandem_lipo"/>
    <property type="match status" value="1"/>
</dbReference>
<dbReference type="Pfam" id="PF04507">
    <property type="entry name" value="DUF576"/>
    <property type="match status" value="1"/>
</dbReference>
<dbReference type="PROSITE" id="PS51257">
    <property type="entry name" value="PROKAR_LIPOPROTEIN"/>
    <property type="match status" value="1"/>
</dbReference>
<protein>
    <recommendedName>
        <fullName>Uncharacterized lipoprotein SACOL0484</fullName>
    </recommendedName>
</protein>
<gene>
    <name type="ordered locus">SACOL0484</name>
</gene>
<proteinExistence type="inferred from homology"/>
<comment type="subcellular location">
    <subcellularLocation>
        <location evidence="1">Cell membrane</location>
        <topology evidence="1">Lipid-anchor</topology>
    </subcellularLocation>
</comment>
<comment type="similarity">
    <text evidence="2">Belongs to the staphylococcal tandem lipoprotein family.</text>
</comment>
<comment type="sequence caution" evidence="2">
    <conflict type="erroneous initiation">
        <sequence resource="EMBL-CDS" id="AAW37605"/>
    </conflict>
</comment>
<accession>Q5HIN3</accession>
<keyword id="KW-1003">Cell membrane</keyword>
<keyword id="KW-0449">Lipoprotein</keyword>
<keyword id="KW-0472">Membrane</keyword>
<keyword id="KW-0564">Palmitate</keyword>
<keyword id="KW-0732">Signal</keyword>
<evidence type="ECO:0000255" key="1">
    <source>
        <dbReference type="PROSITE-ProRule" id="PRU00303"/>
    </source>
</evidence>
<evidence type="ECO:0000305" key="2"/>
<organism>
    <name type="scientific">Staphylococcus aureus (strain COL)</name>
    <dbReference type="NCBI Taxonomy" id="93062"/>
    <lineage>
        <taxon>Bacteria</taxon>
        <taxon>Bacillati</taxon>
        <taxon>Bacillota</taxon>
        <taxon>Bacilli</taxon>
        <taxon>Bacillales</taxon>
        <taxon>Staphylococcaceae</taxon>
        <taxon>Staphylococcus</taxon>
    </lineage>
</organism>
<feature type="signal peptide" evidence="1">
    <location>
        <begin position="1"/>
        <end position="22"/>
    </location>
</feature>
<feature type="chain" id="PRO_0000282111" description="Uncharacterized lipoprotein SACOL0484">
    <location>
        <begin position="23"/>
        <end position="270"/>
    </location>
</feature>
<feature type="lipid moiety-binding region" description="N-palmitoyl cysteine" evidence="1">
    <location>
        <position position="23"/>
    </location>
</feature>
<feature type="lipid moiety-binding region" description="S-diacylglycerol cysteine" evidence="1">
    <location>
        <position position="23"/>
    </location>
</feature>
<sequence>MGYIKRMALYMSVFLLIIFIVGCRNMKDEQKKEEQTNKTDSKEEQIKKSFEKTLDMYPIKNLEELYDKEGYRDGEFKKGDKGMWTIYTDFAKSNKQGGLSNEGMVLYLDRNTRTAKGHYFVKTFYNKGKFPDRKNYKVEMKNNKIILLDKVEDTNLKKRIENFKFFGQYANLKELKNYNNGDVSINENVPSYDAKFKMSNKDENVKQLRSRYNIPTDKAPVLKMHIDGNLKGSSVGYKKLEIDFSKGGKSDLSVIDSLNFQPAKVDEDDE</sequence>
<reference key="1">
    <citation type="journal article" date="2005" name="J. Bacteriol.">
        <title>Insights on evolution of virulence and resistance from the complete genome analysis of an early methicillin-resistant Staphylococcus aureus strain and a biofilm-producing methicillin-resistant Staphylococcus epidermidis strain.</title>
        <authorList>
            <person name="Gill S.R."/>
            <person name="Fouts D.E."/>
            <person name="Archer G.L."/>
            <person name="Mongodin E.F."/>
            <person name="DeBoy R.T."/>
            <person name="Ravel J."/>
            <person name="Paulsen I.T."/>
            <person name="Kolonay J.F."/>
            <person name="Brinkac L.M."/>
            <person name="Beanan M.J."/>
            <person name="Dodson R.J."/>
            <person name="Daugherty S.C."/>
            <person name="Madupu R."/>
            <person name="Angiuoli S.V."/>
            <person name="Durkin A.S."/>
            <person name="Haft D.H."/>
            <person name="Vamathevan J.J."/>
            <person name="Khouri H."/>
            <person name="Utterback T.R."/>
            <person name="Lee C."/>
            <person name="Dimitrov G."/>
            <person name="Jiang L."/>
            <person name="Qin H."/>
            <person name="Weidman J."/>
            <person name="Tran K."/>
            <person name="Kang K.H."/>
            <person name="Hance I.R."/>
            <person name="Nelson K.E."/>
            <person name="Fraser C.M."/>
        </authorList>
    </citation>
    <scope>NUCLEOTIDE SEQUENCE [LARGE SCALE GENOMIC DNA]</scope>
    <source>
        <strain>COL</strain>
    </source>
</reference>